<keyword id="KW-1003">Cell membrane</keyword>
<keyword id="KW-0325">Glycoprotein</keyword>
<keyword id="KW-0336">GPI-anchor</keyword>
<keyword id="KW-0449">Lipoprotein</keyword>
<keyword id="KW-0472">Membrane</keyword>
<keyword id="KW-1185">Reference proteome</keyword>
<keyword id="KW-0732">Signal</keyword>
<gene>
    <name type="primary">BC1</name>
    <name type="ordered locus">Os03g0416200</name>
    <name type="ordered locus">LOC_Os03g30250</name>
    <name type="ORF">OsJ_010811</name>
    <name type="ORF">OSJNBb0059G13.18</name>
</gene>
<accession>Q10JL1</accession>
<accession>A3AJ39</accession>
<accession>B7EGM8</accession>
<accession>Q6VSV0</accession>
<accession>Q6VSV1</accession>
<evidence type="ECO:0000255" key="1"/>
<evidence type="ECO:0000256" key="2">
    <source>
        <dbReference type="SAM" id="MobiDB-lite"/>
    </source>
</evidence>
<evidence type="ECO:0000269" key="3">
    <source>
    </source>
</evidence>
<evidence type="ECO:0000305" key="4"/>
<protein>
    <recommendedName>
        <fullName>COBRA-like protein 5</fullName>
    </recommendedName>
    <alternativeName>
        <fullName>Protein BRITTLE CULM1</fullName>
    </alternativeName>
</protein>
<name>COBL5_ORYSJ</name>
<feature type="signal peptide" evidence="1">
    <location>
        <begin position="1"/>
        <end position="22"/>
    </location>
</feature>
<feature type="chain" id="PRO_0000247635" description="COBRA-like protein 5">
    <location>
        <begin position="23"/>
        <end position="443"/>
    </location>
</feature>
<feature type="propeptide" id="PRO_0000247636" description="Removed in mature form" evidence="1">
    <location>
        <begin position="444"/>
        <end position="468"/>
    </location>
</feature>
<feature type="region of interest" description="Disordered" evidence="2">
    <location>
        <begin position="251"/>
        <end position="278"/>
    </location>
</feature>
<feature type="lipid moiety-binding region" description="GPI-anchor amidated asparagine" evidence="1">
    <location>
        <position position="443"/>
    </location>
</feature>
<feature type="glycosylation site" description="N-linked (GlcNAc...) asparagine" evidence="1">
    <location>
        <position position="31"/>
    </location>
</feature>
<feature type="glycosylation site" description="N-linked (GlcNAc...) asparagine" evidence="1">
    <location>
        <position position="156"/>
    </location>
</feature>
<feature type="glycosylation site" description="N-linked (GlcNAc...) asparagine" evidence="1">
    <location>
        <position position="164"/>
    </location>
</feature>
<feature type="glycosylation site" description="N-linked (GlcNAc...) asparagine" evidence="1">
    <location>
        <position position="228"/>
    </location>
</feature>
<feature type="glycosylation site" description="N-linked (GlcNAc...) asparagine" evidence="1">
    <location>
        <position position="340"/>
    </location>
</feature>
<feature type="glycosylation site" description="N-linked (GlcNAc...) asparagine" evidence="1">
    <location>
        <position position="355"/>
    </location>
</feature>
<feature type="glycosylation site" description="N-linked (GlcNAc...) asparagine" evidence="1">
    <location>
        <position position="374"/>
    </location>
</feature>
<comment type="function">
    <text evidence="3">Involved in determining the orientation of cell expansion, probably by playing an important role in cellulose deposition. May act by recruiting cellulose synthesizing complexes to discrete positions on the cell surface.</text>
</comment>
<comment type="subcellular location">
    <subcellularLocation>
        <location evidence="4">Cell membrane</location>
        <topology evidence="4">Lipid-anchor</topology>
        <topology evidence="4">GPI-anchor</topology>
    </subcellularLocation>
</comment>
<comment type="tissue specificity">
    <text evidence="3">Expressed mainly in developing sclerenchyma cells and in vascular bundles.</text>
</comment>
<comment type="similarity">
    <text evidence="4">Belongs to the COBRA family.</text>
</comment>
<comment type="sequence caution" evidence="4">
    <conflict type="erroneous gene model prediction">
        <sequence resource="EMBL-CDS" id="EAZ27328"/>
    </conflict>
</comment>
<sequence length="468" mass="50960">MELHRCSLLALLLAVTCSVAVAYDPLDPKGNITIKWDVISWTPDGYVAMVTMSNYQMYRQILAPGWTVGWSWAKKEVIWSIVGAQATEQGDCSKFKGGIPHSCKRTPAIVDLLPGVPYNQQIANCCKAGVVSAYGQDPAGSVSAFQVSVGLAGTTNKTVKLPTNFTLAGPGPGYTCGPATIVPSTVYLTPDRRRRTQALMTWTVTCTYSQQLASRYPTCCVSFSSFYNSTIVPCARCACGCGHDGYRGNGGGGKNARAGDGRSRRNSGGGGGHSGGTECIMGDSKRALSAGVNTPRKDGAPLLQCTSHMCPIRVHWHVKLNYKDYWRAKIAITNFNYRMNYTQWTLVAQHPNLNNVTEVFSFQYKPLLPYGNINDTGMFYGLKFYNDLLMEAGPFGNVQSEVLMRKDYNTFTFSQGWAFPRKIYFNGDECKMPPPDSYPYLPNSAPIGPPRSVAAAASAILVVLLLVA</sequence>
<dbReference type="EMBL" id="AY328909">
    <property type="protein sequence ID" value="AAQ56120.1"/>
    <property type="molecule type" value="Genomic_DNA"/>
</dbReference>
<dbReference type="EMBL" id="AC120538">
    <property type="protein sequence ID" value="AAS07098.1"/>
    <property type="molecule type" value="Genomic_DNA"/>
</dbReference>
<dbReference type="EMBL" id="DP000009">
    <property type="protein sequence ID" value="ABF96617.1"/>
    <property type="molecule type" value="Genomic_DNA"/>
</dbReference>
<dbReference type="EMBL" id="AP008209">
    <property type="protein sequence ID" value="BAF12280.1"/>
    <property type="molecule type" value="Genomic_DNA"/>
</dbReference>
<dbReference type="EMBL" id="AP014959">
    <property type="protein sequence ID" value="BAS84702.1"/>
    <property type="molecule type" value="Genomic_DNA"/>
</dbReference>
<dbReference type="EMBL" id="CM000140">
    <property type="protein sequence ID" value="EAZ27328.1"/>
    <property type="status" value="ALT_SEQ"/>
    <property type="molecule type" value="Genomic_DNA"/>
</dbReference>
<dbReference type="EMBL" id="AK069631">
    <property type="protein sequence ID" value="BAG91525.1"/>
    <property type="molecule type" value="mRNA"/>
</dbReference>
<dbReference type="RefSeq" id="XP_015633140.1">
    <property type="nucleotide sequence ID" value="XM_015777654.1"/>
</dbReference>
<dbReference type="FunCoup" id="Q10JL1">
    <property type="interactions" value="1605"/>
</dbReference>
<dbReference type="STRING" id="39947.Q10JL1"/>
<dbReference type="GlyCosmos" id="Q10JL1">
    <property type="glycosylation" value="7 sites, No reported glycans"/>
</dbReference>
<dbReference type="PaxDb" id="39947-Q10JL1"/>
<dbReference type="EnsemblPlants" id="Os03t0416200-01">
    <property type="protein sequence ID" value="Os03t0416200-01"/>
    <property type="gene ID" value="Os03g0416200"/>
</dbReference>
<dbReference type="EnsemblPlants" id="Os03t0416200-02">
    <property type="protein sequence ID" value="Os03t0416200-02"/>
    <property type="gene ID" value="Os03g0416200"/>
</dbReference>
<dbReference type="Gramene" id="Os03t0416200-01">
    <property type="protein sequence ID" value="Os03t0416200-01"/>
    <property type="gene ID" value="Os03g0416200"/>
</dbReference>
<dbReference type="Gramene" id="Os03t0416200-02">
    <property type="protein sequence ID" value="Os03t0416200-02"/>
    <property type="gene ID" value="Os03g0416200"/>
</dbReference>
<dbReference type="KEGG" id="dosa:Os03g0416200"/>
<dbReference type="eggNOG" id="ENOG502QQYT">
    <property type="taxonomic scope" value="Eukaryota"/>
</dbReference>
<dbReference type="HOGENOM" id="CLU_038120_0_0_1"/>
<dbReference type="InParanoid" id="Q10JL1"/>
<dbReference type="OMA" id="HRAGINT"/>
<dbReference type="OrthoDB" id="2012261at2759"/>
<dbReference type="Proteomes" id="UP000000763">
    <property type="component" value="Chromosome 3"/>
</dbReference>
<dbReference type="Proteomes" id="UP000007752">
    <property type="component" value="Chromosome 3"/>
</dbReference>
<dbReference type="Proteomes" id="UP000059680">
    <property type="component" value="Chromosome 3"/>
</dbReference>
<dbReference type="GO" id="GO:0005886">
    <property type="term" value="C:plasma membrane"/>
    <property type="evidence" value="ECO:0000318"/>
    <property type="project" value="GO_Central"/>
</dbReference>
<dbReference type="GO" id="GO:0098552">
    <property type="term" value="C:side of membrane"/>
    <property type="evidence" value="ECO:0007669"/>
    <property type="project" value="UniProtKB-KW"/>
</dbReference>
<dbReference type="GO" id="GO:0010215">
    <property type="term" value="P:cellulose microfibril organization"/>
    <property type="evidence" value="ECO:0007669"/>
    <property type="project" value="InterPro"/>
</dbReference>
<dbReference type="GO" id="GO:0052324">
    <property type="term" value="P:plant-type cell wall cellulose biosynthetic process"/>
    <property type="evidence" value="ECO:0000318"/>
    <property type="project" value="GO_Central"/>
</dbReference>
<dbReference type="InterPro" id="IPR056900">
    <property type="entry name" value="COB_C"/>
</dbReference>
<dbReference type="InterPro" id="IPR006918">
    <property type="entry name" value="COBRA_pln"/>
</dbReference>
<dbReference type="PANTHER" id="PTHR31673:SF55">
    <property type="entry name" value="COBRA-LIKE PROTEIN 5"/>
    <property type="match status" value="1"/>
</dbReference>
<dbReference type="PANTHER" id="PTHR31673">
    <property type="entry name" value="PROTEIN COBRA"/>
    <property type="match status" value="1"/>
</dbReference>
<dbReference type="Pfam" id="PF25079">
    <property type="entry name" value="COB_C"/>
    <property type="match status" value="2"/>
</dbReference>
<dbReference type="Pfam" id="PF04833">
    <property type="entry name" value="COBRA"/>
    <property type="match status" value="1"/>
</dbReference>
<dbReference type="PIRSF" id="PIRSF038122">
    <property type="entry name" value="COBRA"/>
    <property type="match status" value="1"/>
</dbReference>
<proteinExistence type="evidence at transcript level"/>
<organism>
    <name type="scientific">Oryza sativa subsp. japonica</name>
    <name type="common">Rice</name>
    <dbReference type="NCBI Taxonomy" id="39947"/>
    <lineage>
        <taxon>Eukaryota</taxon>
        <taxon>Viridiplantae</taxon>
        <taxon>Streptophyta</taxon>
        <taxon>Embryophyta</taxon>
        <taxon>Tracheophyta</taxon>
        <taxon>Spermatophyta</taxon>
        <taxon>Magnoliopsida</taxon>
        <taxon>Liliopsida</taxon>
        <taxon>Poales</taxon>
        <taxon>Poaceae</taxon>
        <taxon>BOP clade</taxon>
        <taxon>Oryzoideae</taxon>
        <taxon>Oryzeae</taxon>
        <taxon>Oryzinae</taxon>
        <taxon>Oryza</taxon>
        <taxon>Oryza sativa</taxon>
    </lineage>
</organism>
<reference key="1">
    <citation type="journal article" date="2003" name="Plant Cell">
        <title>BRITTLE CULM1, which encodes a COBRA-like protein, affects the mechanical properties of rice plants.</title>
        <authorList>
            <person name="Li Y."/>
            <person name="Qian Q."/>
            <person name="Zhou Y."/>
            <person name="Yan M."/>
            <person name="Sun L."/>
            <person name="Zhang M."/>
            <person name="Fu Z."/>
            <person name="Wang Y."/>
            <person name="Han B."/>
            <person name="Pang X."/>
            <person name="Chen M."/>
            <person name="Li J."/>
        </authorList>
    </citation>
    <scope>NUCLEOTIDE SEQUENCE [GENOMIC DNA]</scope>
    <scope>FUNCTION</scope>
    <scope>TISSUE SPECIFICITY</scope>
    <source>
        <strain>cv. C-Bao</strain>
    </source>
</reference>
<reference key="2">
    <citation type="journal article" date="2005" name="Genome Res.">
        <title>Sequence, annotation, and analysis of synteny between rice chromosome 3 and diverged grass species.</title>
        <authorList>
            <consortium name="The rice chromosome 3 sequencing consortium"/>
            <person name="Buell C.R."/>
            <person name="Yuan Q."/>
            <person name="Ouyang S."/>
            <person name="Liu J."/>
            <person name="Zhu W."/>
            <person name="Wang A."/>
            <person name="Maiti R."/>
            <person name="Haas B."/>
            <person name="Wortman J."/>
            <person name="Pertea M."/>
            <person name="Jones K.M."/>
            <person name="Kim M."/>
            <person name="Overton L."/>
            <person name="Tsitrin T."/>
            <person name="Fadrosh D."/>
            <person name="Bera J."/>
            <person name="Weaver B."/>
            <person name="Jin S."/>
            <person name="Johri S."/>
            <person name="Reardon M."/>
            <person name="Webb K."/>
            <person name="Hill J."/>
            <person name="Moffat K."/>
            <person name="Tallon L."/>
            <person name="Van Aken S."/>
            <person name="Lewis M."/>
            <person name="Utterback T."/>
            <person name="Feldblyum T."/>
            <person name="Zismann V."/>
            <person name="Iobst S."/>
            <person name="Hsiao J."/>
            <person name="de Vazeille A.R."/>
            <person name="Salzberg S.L."/>
            <person name="White O."/>
            <person name="Fraser C.M."/>
            <person name="Yu Y."/>
            <person name="Kim H."/>
            <person name="Rambo T."/>
            <person name="Currie J."/>
            <person name="Collura K."/>
            <person name="Kernodle-Thompson S."/>
            <person name="Wei F."/>
            <person name="Kudrna K."/>
            <person name="Ammiraju J.S.S."/>
            <person name="Luo M."/>
            <person name="Goicoechea J.L."/>
            <person name="Wing R.A."/>
            <person name="Henry D."/>
            <person name="Oates R."/>
            <person name="Palmer M."/>
            <person name="Pries G."/>
            <person name="Saski C."/>
            <person name="Simmons J."/>
            <person name="Soderlund C."/>
            <person name="Nelson W."/>
            <person name="de la Bastide M."/>
            <person name="Spiegel L."/>
            <person name="Nascimento L."/>
            <person name="Huang E."/>
            <person name="Preston R."/>
            <person name="Zutavern T."/>
            <person name="Palmer L."/>
            <person name="O'Shaughnessy A."/>
            <person name="Dike S."/>
            <person name="McCombie W.R."/>
            <person name="Minx P."/>
            <person name="Cordum H."/>
            <person name="Wilson R."/>
            <person name="Jin W."/>
            <person name="Lee H.R."/>
            <person name="Jiang J."/>
            <person name="Jackson S."/>
        </authorList>
    </citation>
    <scope>NUCLEOTIDE SEQUENCE [LARGE SCALE GENOMIC DNA]</scope>
    <source>
        <strain>cv. Nipponbare</strain>
    </source>
</reference>
<reference key="3">
    <citation type="journal article" date="2005" name="Nature">
        <title>The map-based sequence of the rice genome.</title>
        <authorList>
            <consortium name="International rice genome sequencing project (IRGSP)"/>
        </authorList>
    </citation>
    <scope>NUCLEOTIDE SEQUENCE [LARGE SCALE GENOMIC DNA]</scope>
    <source>
        <strain>cv. Nipponbare</strain>
    </source>
</reference>
<reference key="4">
    <citation type="journal article" date="2008" name="Nucleic Acids Res.">
        <title>The rice annotation project database (RAP-DB): 2008 update.</title>
        <authorList>
            <consortium name="The rice annotation project (RAP)"/>
        </authorList>
    </citation>
    <scope>GENOME REANNOTATION</scope>
    <source>
        <strain>cv. Nipponbare</strain>
    </source>
</reference>
<reference key="5">
    <citation type="journal article" date="2013" name="Rice">
        <title>Improvement of the Oryza sativa Nipponbare reference genome using next generation sequence and optical map data.</title>
        <authorList>
            <person name="Kawahara Y."/>
            <person name="de la Bastide M."/>
            <person name="Hamilton J.P."/>
            <person name="Kanamori H."/>
            <person name="McCombie W.R."/>
            <person name="Ouyang S."/>
            <person name="Schwartz D.C."/>
            <person name="Tanaka T."/>
            <person name="Wu J."/>
            <person name="Zhou S."/>
            <person name="Childs K.L."/>
            <person name="Davidson R.M."/>
            <person name="Lin H."/>
            <person name="Quesada-Ocampo L."/>
            <person name="Vaillancourt B."/>
            <person name="Sakai H."/>
            <person name="Lee S.S."/>
            <person name="Kim J."/>
            <person name="Numa H."/>
            <person name="Itoh T."/>
            <person name="Buell C.R."/>
            <person name="Matsumoto T."/>
        </authorList>
    </citation>
    <scope>GENOME REANNOTATION</scope>
    <source>
        <strain>cv. Nipponbare</strain>
    </source>
</reference>
<reference key="6">
    <citation type="journal article" date="2005" name="PLoS Biol.">
        <title>The genomes of Oryza sativa: a history of duplications.</title>
        <authorList>
            <person name="Yu J."/>
            <person name="Wang J."/>
            <person name="Lin W."/>
            <person name="Li S."/>
            <person name="Li H."/>
            <person name="Zhou J."/>
            <person name="Ni P."/>
            <person name="Dong W."/>
            <person name="Hu S."/>
            <person name="Zeng C."/>
            <person name="Zhang J."/>
            <person name="Zhang Y."/>
            <person name="Li R."/>
            <person name="Xu Z."/>
            <person name="Li S."/>
            <person name="Li X."/>
            <person name="Zheng H."/>
            <person name="Cong L."/>
            <person name="Lin L."/>
            <person name="Yin J."/>
            <person name="Geng J."/>
            <person name="Li G."/>
            <person name="Shi J."/>
            <person name="Liu J."/>
            <person name="Lv H."/>
            <person name="Li J."/>
            <person name="Wang J."/>
            <person name="Deng Y."/>
            <person name="Ran L."/>
            <person name="Shi X."/>
            <person name="Wang X."/>
            <person name="Wu Q."/>
            <person name="Li C."/>
            <person name="Ren X."/>
            <person name="Wang J."/>
            <person name="Wang X."/>
            <person name="Li D."/>
            <person name="Liu D."/>
            <person name="Zhang X."/>
            <person name="Ji Z."/>
            <person name="Zhao W."/>
            <person name="Sun Y."/>
            <person name="Zhang Z."/>
            <person name="Bao J."/>
            <person name="Han Y."/>
            <person name="Dong L."/>
            <person name="Ji J."/>
            <person name="Chen P."/>
            <person name="Wu S."/>
            <person name="Liu J."/>
            <person name="Xiao Y."/>
            <person name="Bu D."/>
            <person name="Tan J."/>
            <person name="Yang L."/>
            <person name="Ye C."/>
            <person name="Zhang J."/>
            <person name="Xu J."/>
            <person name="Zhou Y."/>
            <person name="Yu Y."/>
            <person name="Zhang B."/>
            <person name="Zhuang S."/>
            <person name="Wei H."/>
            <person name="Liu B."/>
            <person name="Lei M."/>
            <person name="Yu H."/>
            <person name="Li Y."/>
            <person name="Xu H."/>
            <person name="Wei S."/>
            <person name="He X."/>
            <person name="Fang L."/>
            <person name="Zhang Z."/>
            <person name="Zhang Y."/>
            <person name="Huang X."/>
            <person name="Su Z."/>
            <person name="Tong W."/>
            <person name="Li J."/>
            <person name="Tong Z."/>
            <person name="Li S."/>
            <person name="Ye J."/>
            <person name="Wang L."/>
            <person name="Fang L."/>
            <person name="Lei T."/>
            <person name="Chen C.-S."/>
            <person name="Chen H.-C."/>
            <person name="Xu Z."/>
            <person name="Li H."/>
            <person name="Huang H."/>
            <person name="Zhang F."/>
            <person name="Xu H."/>
            <person name="Li N."/>
            <person name="Zhao C."/>
            <person name="Li S."/>
            <person name="Dong L."/>
            <person name="Huang Y."/>
            <person name="Li L."/>
            <person name="Xi Y."/>
            <person name="Qi Q."/>
            <person name="Li W."/>
            <person name="Zhang B."/>
            <person name="Hu W."/>
            <person name="Zhang Y."/>
            <person name="Tian X."/>
            <person name="Jiao Y."/>
            <person name="Liang X."/>
            <person name="Jin J."/>
            <person name="Gao L."/>
            <person name="Zheng W."/>
            <person name="Hao B."/>
            <person name="Liu S.-M."/>
            <person name="Wang W."/>
            <person name="Yuan L."/>
            <person name="Cao M."/>
            <person name="McDermott J."/>
            <person name="Samudrala R."/>
            <person name="Wang J."/>
            <person name="Wong G.K.-S."/>
            <person name="Yang H."/>
        </authorList>
    </citation>
    <scope>NUCLEOTIDE SEQUENCE [LARGE SCALE GENOMIC DNA]</scope>
    <source>
        <strain>cv. Nipponbare</strain>
    </source>
</reference>
<reference key="7">
    <citation type="journal article" date="2003" name="Science">
        <title>Collection, mapping, and annotation of over 28,000 cDNA clones from japonica rice.</title>
        <authorList>
            <consortium name="The rice full-length cDNA consortium"/>
        </authorList>
    </citation>
    <scope>NUCLEOTIDE SEQUENCE [LARGE SCALE MRNA]</scope>
    <source>
        <strain>cv. Nipponbare</strain>
    </source>
</reference>